<comment type="catalytic activity">
    <reaction evidence="1">
        <text>1-(5-phospho-beta-D-ribosyl)-5-[(5-phospho-beta-D-ribosylamino)methylideneamino]imidazole-4-carboxamide = 5-[(5-phospho-1-deoxy-D-ribulos-1-ylimino)methylamino]-1-(5-phospho-beta-D-ribosyl)imidazole-4-carboxamide</text>
        <dbReference type="Rhea" id="RHEA:15469"/>
        <dbReference type="ChEBI" id="CHEBI:58435"/>
        <dbReference type="ChEBI" id="CHEBI:58525"/>
        <dbReference type="EC" id="5.3.1.16"/>
    </reaction>
</comment>
<comment type="pathway">
    <text evidence="1">Amino-acid biosynthesis; L-histidine biosynthesis; L-histidine from 5-phospho-alpha-D-ribose 1-diphosphate: step 4/9.</text>
</comment>
<comment type="subcellular location">
    <subcellularLocation>
        <location evidence="1">Cytoplasm</location>
    </subcellularLocation>
</comment>
<comment type="similarity">
    <text evidence="1">Belongs to the HisA/HisF family.</text>
</comment>
<feature type="chain" id="PRO_1000190561" description="1-(5-phosphoribosyl)-5-[(5-phosphoribosylamino)methylideneamino] imidazole-4-carboxamide isomerase">
    <location>
        <begin position="1"/>
        <end position="244"/>
    </location>
</feature>
<feature type="active site" description="Proton acceptor" evidence="1">
    <location>
        <position position="10"/>
    </location>
</feature>
<feature type="active site" description="Proton donor" evidence="1">
    <location>
        <position position="132"/>
    </location>
</feature>
<protein>
    <recommendedName>
        <fullName evidence="1">1-(5-phosphoribosyl)-5-[(5-phosphoribosylamino)methylideneamino] imidazole-4-carboxamide isomerase</fullName>
        <ecNumber evidence="1">5.3.1.16</ecNumber>
    </recommendedName>
    <alternativeName>
        <fullName evidence="1">Phosphoribosylformimino-5-aminoimidazole carboxamide ribotide isomerase</fullName>
    </alternativeName>
</protein>
<keyword id="KW-0028">Amino-acid biosynthesis</keyword>
<keyword id="KW-0963">Cytoplasm</keyword>
<keyword id="KW-0368">Histidine biosynthesis</keyword>
<keyword id="KW-0413">Isomerase</keyword>
<reference key="1">
    <citation type="submission" date="2008-06" db="EMBL/GenBank/DDBJ databases">
        <title>Complete sequence of Stenotrophomonas maltophilia R551-3.</title>
        <authorList>
            <consortium name="US DOE Joint Genome Institute"/>
            <person name="Lucas S."/>
            <person name="Copeland A."/>
            <person name="Lapidus A."/>
            <person name="Glavina del Rio T."/>
            <person name="Dalin E."/>
            <person name="Tice H."/>
            <person name="Pitluck S."/>
            <person name="Chain P."/>
            <person name="Malfatti S."/>
            <person name="Shin M."/>
            <person name="Vergez L."/>
            <person name="Lang D."/>
            <person name="Schmutz J."/>
            <person name="Larimer F."/>
            <person name="Land M."/>
            <person name="Hauser L."/>
            <person name="Kyrpides N."/>
            <person name="Mikhailova N."/>
            <person name="Taghavi S."/>
            <person name="Monchy S."/>
            <person name="Newman L."/>
            <person name="Vangronsveld J."/>
            <person name="van der Lelie D."/>
            <person name="Richardson P."/>
        </authorList>
    </citation>
    <scope>NUCLEOTIDE SEQUENCE [LARGE SCALE GENOMIC DNA]</scope>
    <source>
        <strain>R551-3</strain>
    </source>
</reference>
<evidence type="ECO:0000255" key="1">
    <source>
        <dbReference type="HAMAP-Rule" id="MF_01014"/>
    </source>
</evidence>
<sequence length="244" mass="26057">MSFIVYPALDIRDGRVVRLRQGDYAQETSYGDDPLPRTQAFAAQGAQWMHLVDLDAARAGGYTLAPLLSSIRAQTTLQVQTGGGVRGRDDVARILDAGAGRVVVGSLAVRRPDEVVGWLEEFGAERITIALDARQDAQGQWQLPVHGWTENADVTLDDLARRYARAGMRHLLCTDIARDGMLAGPNISLYQHLSALLPGVAVQASGGIRDVADVAEARAAGCGGAILGKALLEQRMDLAEALAC</sequence>
<name>HIS4_STRM5</name>
<accession>B4STP1</accession>
<organism>
    <name type="scientific">Stenotrophomonas maltophilia (strain R551-3)</name>
    <dbReference type="NCBI Taxonomy" id="391008"/>
    <lineage>
        <taxon>Bacteria</taxon>
        <taxon>Pseudomonadati</taxon>
        <taxon>Pseudomonadota</taxon>
        <taxon>Gammaproteobacteria</taxon>
        <taxon>Lysobacterales</taxon>
        <taxon>Lysobacteraceae</taxon>
        <taxon>Stenotrophomonas</taxon>
        <taxon>Stenotrophomonas maltophilia group</taxon>
    </lineage>
</organism>
<proteinExistence type="inferred from homology"/>
<gene>
    <name evidence="1" type="primary">hisA</name>
    <name type="ordered locus">Smal_1761</name>
</gene>
<dbReference type="EC" id="5.3.1.16" evidence="1"/>
<dbReference type="EMBL" id="CP001111">
    <property type="protein sequence ID" value="ACF51465.1"/>
    <property type="molecule type" value="Genomic_DNA"/>
</dbReference>
<dbReference type="RefSeq" id="WP_012510886.1">
    <property type="nucleotide sequence ID" value="NC_011071.1"/>
</dbReference>
<dbReference type="SMR" id="B4STP1"/>
<dbReference type="STRING" id="391008.Smal_1761"/>
<dbReference type="KEGG" id="smt:Smal_1761"/>
<dbReference type="eggNOG" id="COG0106">
    <property type="taxonomic scope" value="Bacteria"/>
</dbReference>
<dbReference type="HOGENOM" id="CLU_048577_1_2_6"/>
<dbReference type="OrthoDB" id="9807749at2"/>
<dbReference type="UniPathway" id="UPA00031">
    <property type="reaction ID" value="UER00009"/>
</dbReference>
<dbReference type="Proteomes" id="UP000001867">
    <property type="component" value="Chromosome"/>
</dbReference>
<dbReference type="GO" id="GO:0005737">
    <property type="term" value="C:cytoplasm"/>
    <property type="evidence" value="ECO:0007669"/>
    <property type="project" value="UniProtKB-SubCell"/>
</dbReference>
<dbReference type="GO" id="GO:0003949">
    <property type="term" value="F:1-(5-phosphoribosyl)-5-[(5-phosphoribosylamino)methylideneamino]imidazole-4-carboxamide isomerase activity"/>
    <property type="evidence" value="ECO:0007669"/>
    <property type="project" value="UniProtKB-UniRule"/>
</dbReference>
<dbReference type="GO" id="GO:0000105">
    <property type="term" value="P:L-histidine biosynthetic process"/>
    <property type="evidence" value="ECO:0007669"/>
    <property type="project" value="UniProtKB-UniRule"/>
</dbReference>
<dbReference type="GO" id="GO:0000162">
    <property type="term" value="P:L-tryptophan biosynthetic process"/>
    <property type="evidence" value="ECO:0007669"/>
    <property type="project" value="TreeGrafter"/>
</dbReference>
<dbReference type="CDD" id="cd04732">
    <property type="entry name" value="HisA"/>
    <property type="match status" value="1"/>
</dbReference>
<dbReference type="FunFam" id="3.20.20.70:FF:000009">
    <property type="entry name" value="1-(5-phosphoribosyl)-5-[(5-phosphoribosylamino)methylideneamino] imidazole-4-carboxamide isomerase"/>
    <property type="match status" value="1"/>
</dbReference>
<dbReference type="Gene3D" id="3.20.20.70">
    <property type="entry name" value="Aldolase class I"/>
    <property type="match status" value="1"/>
</dbReference>
<dbReference type="HAMAP" id="MF_01014">
    <property type="entry name" value="HisA"/>
    <property type="match status" value="1"/>
</dbReference>
<dbReference type="InterPro" id="IPR013785">
    <property type="entry name" value="Aldolase_TIM"/>
</dbReference>
<dbReference type="InterPro" id="IPR006062">
    <property type="entry name" value="His_biosynth"/>
</dbReference>
<dbReference type="InterPro" id="IPR006063">
    <property type="entry name" value="HisA_bact_arch"/>
</dbReference>
<dbReference type="InterPro" id="IPR044524">
    <property type="entry name" value="Isoase_HisA-like"/>
</dbReference>
<dbReference type="InterPro" id="IPR023016">
    <property type="entry name" value="Isoase_HisA-like_bact"/>
</dbReference>
<dbReference type="InterPro" id="IPR011060">
    <property type="entry name" value="RibuloseP-bd_barrel"/>
</dbReference>
<dbReference type="NCBIfam" id="TIGR00007">
    <property type="entry name" value="1-(5-phosphoribosyl)-5-[(5-phosphoribosylamino)methylideneamino]imidazole-4-carboxamide isomerase"/>
    <property type="match status" value="1"/>
</dbReference>
<dbReference type="PANTHER" id="PTHR43090">
    <property type="entry name" value="1-(5-PHOSPHORIBOSYL)-5-[(5-PHOSPHORIBOSYLAMINO)METHYLIDENEAMINO] IMIDAZOLE-4-CARBOXAMIDE ISOMERASE"/>
    <property type="match status" value="1"/>
</dbReference>
<dbReference type="PANTHER" id="PTHR43090:SF2">
    <property type="entry name" value="1-(5-PHOSPHORIBOSYL)-5-[(5-PHOSPHORIBOSYLAMINO)METHYLIDENEAMINO] IMIDAZOLE-4-CARBOXAMIDE ISOMERASE"/>
    <property type="match status" value="1"/>
</dbReference>
<dbReference type="Pfam" id="PF00977">
    <property type="entry name" value="His_biosynth"/>
    <property type="match status" value="1"/>
</dbReference>
<dbReference type="SUPFAM" id="SSF51366">
    <property type="entry name" value="Ribulose-phoshate binding barrel"/>
    <property type="match status" value="1"/>
</dbReference>